<sequence>MNERMVDQSMHSEETDFELSLRPTRLRQYIGQNSIKSNLEVFIKAAKLRHEPLDHVLLFGPPGLGKTTLSNIIANEMEVNIRTVSGPSLERPGDLAAILSGLQPGDVLFIDEIHRLSSVVEEVLYPAMEDFFLDIIIGKGDEARSIRIDLPPFTLVGATTRAGSLTGPLRDRFGVHLRLEYYNESDLKEIIIRTAEVLGTGIDEESAIELAKRSRGTPRVANRLLKRVRDFQQVNEDEQIYIETTKHALGLLQVDQHGLDYIDHKMMNCIIKQYNGGPVGLDTIAVTIGEERITIEDVYEPFLIQKGFLERTPRGRKATPLAYEHFAKSNEERE</sequence>
<protein>
    <recommendedName>
        <fullName evidence="1">Holliday junction branch migration complex subunit RuvB</fullName>
        <ecNumber evidence="1">3.6.4.-</ecNumber>
    </recommendedName>
</protein>
<reference key="1">
    <citation type="journal article" date="2004" name="Proc. Natl. Acad. Sci. U.S.A.">
        <title>Complete genomes of two clinical Staphylococcus aureus strains: evidence for the rapid evolution of virulence and drug resistance.</title>
        <authorList>
            <person name="Holden M.T.G."/>
            <person name="Feil E.J."/>
            <person name="Lindsay J.A."/>
            <person name="Peacock S.J."/>
            <person name="Day N.P.J."/>
            <person name="Enright M.C."/>
            <person name="Foster T.J."/>
            <person name="Moore C.E."/>
            <person name="Hurst L."/>
            <person name="Atkin R."/>
            <person name="Barron A."/>
            <person name="Bason N."/>
            <person name="Bentley S.D."/>
            <person name="Chillingworth C."/>
            <person name="Chillingworth T."/>
            <person name="Churcher C."/>
            <person name="Clark L."/>
            <person name="Corton C."/>
            <person name="Cronin A."/>
            <person name="Doggett J."/>
            <person name="Dowd L."/>
            <person name="Feltwell T."/>
            <person name="Hance Z."/>
            <person name="Harris B."/>
            <person name="Hauser H."/>
            <person name="Holroyd S."/>
            <person name="Jagels K."/>
            <person name="James K.D."/>
            <person name="Lennard N."/>
            <person name="Line A."/>
            <person name="Mayes R."/>
            <person name="Moule S."/>
            <person name="Mungall K."/>
            <person name="Ormond D."/>
            <person name="Quail M.A."/>
            <person name="Rabbinowitsch E."/>
            <person name="Rutherford K.M."/>
            <person name="Sanders M."/>
            <person name="Sharp S."/>
            <person name="Simmonds M."/>
            <person name="Stevens K."/>
            <person name="Whitehead S."/>
            <person name="Barrell B.G."/>
            <person name="Spratt B.G."/>
            <person name="Parkhill J."/>
        </authorList>
    </citation>
    <scope>NUCLEOTIDE SEQUENCE [LARGE SCALE GENOMIC DNA]</scope>
    <source>
        <strain>MRSA252</strain>
    </source>
</reference>
<organism>
    <name type="scientific">Staphylococcus aureus (strain MRSA252)</name>
    <dbReference type="NCBI Taxonomy" id="282458"/>
    <lineage>
        <taxon>Bacteria</taxon>
        <taxon>Bacillati</taxon>
        <taxon>Bacillota</taxon>
        <taxon>Bacilli</taxon>
        <taxon>Bacillales</taxon>
        <taxon>Staphylococcaceae</taxon>
        <taxon>Staphylococcus</taxon>
    </lineage>
</organism>
<comment type="function">
    <text evidence="1">The RuvA-RuvB-RuvC complex processes Holliday junction (HJ) DNA during genetic recombination and DNA repair, while the RuvA-RuvB complex plays an important role in the rescue of blocked DNA replication forks via replication fork reversal (RFR). RuvA specifically binds to HJ cruciform DNA, conferring on it an open structure. The RuvB hexamer acts as an ATP-dependent pump, pulling dsDNA into and through the RuvAB complex. RuvB forms 2 homohexamers on either side of HJ DNA bound by 1 or 2 RuvA tetramers; 4 subunits per hexamer contact DNA at a time. Coordinated motions by a converter formed by DNA-disengaged RuvB subunits stimulates ATP hydrolysis and nucleotide exchange. Immobilization of the converter enables RuvB to convert the ATP-contained energy into a lever motion, pulling 2 nucleotides of DNA out of the RuvA tetramer per ATP hydrolyzed, thus driving DNA branch migration. The RuvB motors rotate together with the DNA substrate, which together with the progressing nucleotide cycle form the mechanistic basis for DNA recombination by continuous HJ branch migration. Branch migration allows RuvC to scan DNA until it finds its consensus sequence, where it cleaves and resolves cruciform DNA.</text>
</comment>
<comment type="catalytic activity">
    <reaction evidence="1">
        <text>ATP + H2O = ADP + phosphate + H(+)</text>
        <dbReference type="Rhea" id="RHEA:13065"/>
        <dbReference type="ChEBI" id="CHEBI:15377"/>
        <dbReference type="ChEBI" id="CHEBI:15378"/>
        <dbReference type="ChEBI" id="CHEBI:30616"/>
        <dbReference type="ChEBI" id="CHEBI:43474"/>
        <dbReference type="ChEBI" id="CHEBI:456216"/>
    </reaction>
</comment>
<comment type="subunit">
    <text evidence="1">Homohexamer. Forms an RuvA(8)-RuvB(12)-Holliday junction (HJ) complex. HJ DNA is sandwiched between 2 RuvA tetramers; dsDNA enters through RuvA and exits via RuvB. An RuvB hexamer assembles on each DNA strand where it exits the tetramer. Each RuvB hexamer is contacted by two RuvA subunits (via domain III) on 2 adjacent RuvB subunits; this complex drives branch migration. In the full resolvosome a probable DNA-RuvA(4)-RuvB(12)-RuvC(2) complex forms which resolves the HJ.</text>
</comment>
<comment type="subcellular location">
    <subcellularLocation>
        <location evidence="1">Cytoplasm</location>
    </subcellularLocation>
</comment>
<comment type="domain">
    <text evidence="1">Has 3 domains, the large (RuvB-L) and small ATPase (RuvB-S) domains and the C-terminal head (RuvB-H) domain. The head domain binds DNA, while the ATPase domains jointly bind ATP, ADP or are empty depending on the state of the subunit in the translocation cycle. During a single DNA translocation step the structure of each domain remains the same, but their relative positions change.</text>
</comment>
<comment type="similarity">
    <text evidence="1">Belongs to the RuvB family.</text>
</comment>
<feature type="chain" id="PRO_0000165597" description="Holliday junction branch migration complex subunit RuvB">
    <location>
        <begin position="1"/>
        <end position="334"/>
    </location>
</feature>
<feature type="region of interest" description="Large ATPase domain (RuvB-L)" evidence="1">
    <location>
        <begin position="1"/>
        <end position="182"/>
    </location>
</feature>
<feature type="region of interest" description="Small ATPAse domain (RuvB-S)" evidence="1">
    <location>
        <begin position="183"/>
        <end position="253"/>
    </location>
</feature>
<feature type="region of interest" description="Head domain (RuvB-H)" evidence="1">
    <location>
        <begin position="256"/>
        <end position="334"/>
    </location>
</feature>
<feature type="binding site" evidence="1">
    <location>
        <position position="21"/>
    </location>
    <ligand>
        <name>ATP</name>
        <dbReference type="ChEBI" id="CHEBI:30616"/>
    </ligand>
</feature>
<feature type="binding site" evidence="1">
    <location>
        <position position="22"/>
    </location>
    <ligand>
        <name>ATP</name>
        <dbReference type="ChEBI" id="CHEBI:30616"/>
    </ligand>
</feature>
<feature type="binding site" evidence="1">
    <location>
        <position position="63"/>
    </location>
    <ligand>
        <name>ATP</name>
        <dbReference type="ChEBI" id="CHEBI:30616"/>
    </ligand>
</feature>
<feature type="binding site" evidence="1">
    <location>
        <position position="66"/>
    </location>
    <ligand>
        <name>ATP</name>
        <dbReference type="ChEBI" id="CHEBI:30616"/>
    </ligand>
</feature>
<feature type="binding site" evidence="1">
    <location>
        <position position="67"/>
    </location>
    <ligand>
        <name>ATP</name>
        <dbReference type="ChEBI" id="CHEBI:30616"/>
    </ligand>
</feature>
<feature type="binding site" evidence="1">
    <location>
        <position position="67"/>
    </location>
    <ligand>
        <name>Mg(2+)</name>
        <dbReference type="ChEBI" id="CHEBI:18420"/>
    </ligand>
</feature>
<feature type="binding site" evidence="1">
    <location>
        <position position="68"/>
    </location>
    <ligand>
        <name>ATP</name>
        <dbReference type="ChEBI" id="CHEBI:30616"/>
    </ligand>
</feature>
<feature type="binding site" evidence="1">
    <location>
        <begin position="129"/>
        <end position="131"/>
    </location>
    <ligand>
        <name>ATP</name>
        <dbReference type="ChEBI" id="CHEBI:30616"/>
    </ligand>
</feature>
<feature type="binding site" evidence="1">
    <location>
        <position position="172"/>
    </location>
    <ligand>
        <name>ATP</name>
        <dbReference type="ChEBI" id="CHEBI:30616"/>
    </ligand>
</feature>
<feature type="binding site" evidence="1">
    <location>
        <position position="182"/>
    </location>
    <ligand>
        <name>ATP</name>
        <dbReference type="ChEBI" id="CHEBI:30616"/>
    </ligand>
</feature>
<feature type="binding site" evidence="1">
    <location>
        <position position="219"/>
    </location>
    <ligand>
        <name>ATP</name>
        <dbReference type="ChEBI" id="CHEBI:30616"/>
    </ligand>
</feature>
<feature type="binding site" evidence="1">
    <location>
        <position position="292"/>
    </location>
    <ligand>
        <name>DNA</name>
        <dbReference type="ChEBI" id="CHEBI:16991"/>
    </ligand>
</feature>
<feature type="binding site" evidence="1">
    <location>
        <position position="311"/>
    </location>
    <ligand>
        <name>DNA</name>
        <dbReference type="ChEBI" id="CHEBI:16991"/>
    </ligand>
</feature>
<feature type="binding site" evidence="1">
    <location>
        <position position="316"/>
    </location>
    <ligand>
        <name>DNA</name>
        <dbReference type="ChEBI" id="CHEBI:16991"/>
    </ligand>
</feature>
<name>RUVB_STAAR</name>
<keyword id="KW-0067">ATP-binding</keyword>
<keyword id="KW-0963">Cytoplasm</keyword>
<keyword id="KW-0227">DNA damage</keyword>
<keyword id="KW-0233">DNA recombination</keyword>
<keyword id="KW-0234">DNA repair</keyword>
<keyword id="KW-0238">DNA-binding</keyword>
<keyword id="KW-0378">Hydrolase</keyword>
<keyword id="KW-0547">Nucleotide-binding</keyword>
<accession>Q6GG63</accession>
<proteinExistence type="inferred from homology"/>
<dbReference type="EC" id="3.6.4.-" evidence="1"/>
<dbReference type="EMBL" id="BX571856">
    <property type="protein sequence ID" value="CAG40712.1"/>
    <property type="molecule type" value="Genomic_DNA"/>
</dbReference>
<dbReference type="RefSeq" id="WP_001005767.1">
    <property type="nucleotide sequence ID" value="NC_002952.2"/>
</dbReference>
<dbReference type="SMR" id="Q6GG63"/>
<dbReference type="KEGG" id="sar:SAR1721"/>
<dbReference type="HOGENOM" id="CLU_055599_1_0_9"/>
<dbReference type="Proteomes" id="UP000000596">
    <property type="component" value="Chromosome"/>
</dbReference>
<dbReference type="GO" id="GO:0005737">
    <property type="term" value="C:cytoplasm"/>
    <property type="evidence" value="ECO:0007669"/>
    <property type="project" value="UniProtKB-SubCell"/>
</dbReference>
<dbReference type="GO" id="GO:0048476">
    <property type="term" value="C:Holliday junction resolvase complex"/>
    <property type="evidence" value="ECO:0007669"/>
    <property type="project" value="UniProtKB-UniRule"/>
</dbReference>
<dbReference type="GO" id="GO:0005524">
    <property type="term" value="F:ATP binding"/>
    <property type="evidence" value="ECO:0007669"/>
    <property type="project" value="UniProtKB-UniRule"/>
</dbReference>
<dbReference type="GO" id="GO:0016887">
    <property type="term" value="F:ATP hydrolysis activity"/>
    <property type="evidence" value="ECO:0007669"/>
    <property type="project" value="InterPro"/>
</dbReference>
<dbReference type="GO" id="GO:0000400">
    <property type="term" value="F:four-way junction DNA binding"/>
    <property type="evidence" value="ECO:0007669"/>
    <property type="project" value="UniProtKB-UniRule"/>
</dbReference>
<dbReference type="GO" id="GO:0009378">
    <property type="term" value="F:four-way junction helicase activity"/>
    <property type="evidence" value="ECO:0007669"/>
    <property type="project" value="InterPro"/>
</dbReference>
<dbReference type="GO" id="GO:0006310">
    <property type="term" value="P:DNA recombination"/>
    <property type="evidence" value="ECO:0007669"/>
    <property type="project" value="UniProtKB-UniRule"/>
</dbReference>
<dbReference type="GO" id="GO:0006281">
    <property type="term" value="P:DNA repair"/>
    <property type="evidence" value="ECO:0007669"/>
    <property type="project" value="UniProtKB-UniRule"/>
</dbReference>
<dbReference type="CDD" id="cd00009">
    <property type="entry name" value="AAA"/>
    <property type="match status" value="1"/>
</dbReference>
<dbReference type="Gene3D" id="1.10.8.60">
    <property type="match status" value="1"/>
</dbReference>
<dbReference type="Gene3D" id="3.40.50.300">
    <property type="entry name" value="P-loop containing nucleotide triphosphate hydrolases"/>
    <property type="match status" value="1"/>
</dbReference>
<dbReference type="Gene3D" id="1.10.10.10">
    <property type="entry name" value="Winged helix-like DNA-binding domain superfamily/Winged helix DNA-binding domain"/>
    <property type="match status" value="1"/>
</dbReference>
<dbReference type="HAMAP" id="MF_00016">
    <property type="entry name" value="DNA_HJ_migration_RuvB"/>
    <property type="match status" value="1"/>
</dbReference>
<dbReference type="InterPro" id="IPR003593">
    <property type="entry name" value="AAA+_ATPase"/>
</dbReference>
<dbReference type="InterPro" id="IPR041445">
    <property type="entry name" value="AAA_lid_4"/>
</dbReference>
<dbReference type="InterPro" id="IPR004605">
    <property type="entry name" value="DNA_helicase_Holl-junc_RuvB"/>
</dbReference>
<dbReference type="InterPro" id="IPR027417">
    <property type="entry name" value="P-loop_NTPase"/>
</dbReference>
<dbReference type="InterPro" id="IPR008824">
    <property type="entry name" value="RuvB-like_N"/>
</dbReference>
<dbReference type="InterPro" id="IPR008823">
    <property type="entry name" value="RuvB_C"/>
</dbReference>
<dbReference type="InterPro" id="IPR036388">
    <property type="entry name" value="WH-like_DNA-bd_sf"/>
</dbReference>
<dbReference type="InterPro" id="IPR036390">
    <property type="entry name" value="WH_DNA-bd_sf"/>
</dbReference>
<dbReference type="NCBIfam" id="NF000868">
    <property type="entry name" value="PRK00080.1"/>
    <property type="match status" value="1"/>
</dbReference>
<dbReference type="NCBIfam" id="TIGR00635">
    <property type="entry name" value="ruvB"/>
    <property type="match status" value="1"/>
</dbReference>
<dbReference type="PANTHER" id="PTHR42848">
    <property type="match status" value="1"/>
</dbReference>
<dbReference type="PANTHER" id="PTHR42848:SF1">
    <property type="entry name" value="HOLLIDAY JUNCTION BRANCH MIGRATION COMPLEX SUBUNIT RUVB"/>
    <property type="match status" value="1"/>
</dbReference>
<dbReference type="Pfam" id="PF17864">
    <property type="entry name" value="AAA_lid_4"/>
    <property type="match status" value="1"/>
</dbReference>
<dbReference type="Pfam" id="PF05491">
    <property type="entry name" value="RuvB_C"/>
    <property type="match status" value="1"/>
</dbReference>
<dbReference type="Pfam" id="PF05496">
    <property type="entry name" value="RuvB_N"/>
    <property type="match status" value="1"/>
</dbReference>
<dbReference type="SMART" id="SM00382">
    <property type="entry name" value="AAA"/>
    <property type="match status" value="1"/>
</dbReference>
<dbReference type="SUPFAM" id="SSF52540">
    <property type="entry name" value="P-loop containing nucleoside triphosphate hydrolases"/>
    <property type="match status" value="1"/>
</dbReference>
<dbReference type="SUPFAM" id="SSF46785">
    <property type="entry name" value="Winged helix' DNA-binding domain"/>
    <property type="match status" value="1"/>
</dbReference>
<evidence type="ECO:0000255" key="1">
    <source>
        <dbReference type="HAMAP-Rule" id="MF_00016"/>
    </source>
</evidence>
<gene>
    <name evidence="1" type="primary">ruvB</name>
    <name type="ordered locus">SAR1721</name>
</gene>